<name>LEXA_MYCSJ</name>
<reference key="1">
    <citation type="submission" date="2007-02" db="EMBL/GenBank/DDBJ databases">
        <title>Complete sequence of Mycobacterium sp. JLS.</title>
        <authorList>
            <consortium name="US DOE Joint Genome Institute"/>
            <person name="Copeland A."/>
            <person name="Lucas S."/>
            <person name="Lapidus A."/>
            <person name="Barry K."/>
            <person name="Detter J.C."/>
            <person name="Glavina del Rio T."/>
            <person name="Hammon N."/>
            <person name="Israni S."/>
            <person name="Dalin E."/>
            <person name="Tice H."/>
            <person name="Pitluck S."/>
            <person name="Chain P."/>
            <person name="Malfatti S."/>
            <person name="Shin M."/>
            <person name="Vergez L."/>
            <person name="Schmutz J."/>
            <person name="Larimer F."/>
            <person name="Land M."/>
            <person name="Hauser L."/>
            <person name="Kyrpides N."/>
            <person name="Mikhailova N."/>
            <person name="Miller C.D."/>
            <person name="Anderson A.J."/>
            <person name="Sims R.C."/>
            <person name="Richardson P."/>
        </authorList>
    </citation>
    <scope>NUCLEOTIDE SEQUENCE [LARGE SCALE GENOMIC DNA]</scope>
    <source>
        <strain>JLS</strain>
    </source>
</reference>
<evidence type="ECO:0000255" key="1">
    <source>
        <dbReference type="HAMAP-Rule" id="MF_00015"/>
    </source>
</evidence>
<evidence type="ECO:0000256" key="2">
    <source>
        <dbReference type="SAM" id="MobiDB-lite"/>
    </source>
</evidence>
<dbReference type="EC" id="3.4.21.88" evidence="1"/>
<dbReference type="EMBL" id="CP000580">
    <property type="protein sequence ID" value="ABN97943.1"/>
    <property type="molecule type" value="Genomic_DNA"/>
</dbReference>
<dbReference type="SMR" id="A3PYG6"/>
<dbReference type="MEROPS" id="S24.001"/>
<dbReference type="KEGG" id="mjl:Mjls_2157"/>
<dbReference type="HOGENOM" id="CLU_066192_45_0_11"/>
<dbReference type="BioCyc" id="MSP164757:G1G8C-2177-MONOMER"/>
<dbReference type="GO" id="GO:0003677">
    <property type="term" value="F:DNA binding"/>
    <property type="evidence" value="ECO:0007669"/>
    <property type="project" value="UniProtKB-UniRule"/>
</dbReference>
<dbReference type="GO" id="GO:0004252">
    <property type="term" value="F:serine-type endopeptidase activity"/>
    <property type="evidence" value="ECO:0007669"/>
    <property type="project" value="UniProtKB-UniRule"/>
</dbReference>
<dbReference type="GO" id="GO:0006281">
    <property type="term" value="P:DNA repair"/>
    <property type="evidence" value="ECO:0007669"/>
    <property type="project" value="UniProtKB-UniRule"/>
</dbReference>
<dbReference type="GO" id="GO:0006260">
    <property type="term" value="P:DNA replication"/>
    <property type="evidence" value="ECO:0007669"/>
    <property type="project" value="UniProtKB-UniRule"/>
</dbReference>
<dbReference type="GO" id="GO:0045892">
    <property type="term" value="P:negative regulation of DNA-templated transcription"/>
    <property type="evidence" value="ECO:0007669"/>
    <property type="project" value="UniProtKB-UniRule"/>
</dbReference>
<dbReference type="GO" id="GO:0006508">
    <property type="term" value="P:proteolysis"/>
    <property type="evidence" value="ECO:0007669"/>
    <property type="project" value="InterPro"/>
</dbReference>
<dbReference type="GO" id="GO:0009432">
    <property type="term" value="P:SOS response"/>
    <property type="evidence" value="ECO:0007669"/>
    <property type="project" value="UniProtKB-UniRule"/>
</dbReference>
<dbReference type="CDD" id="cd06529">
    <property type="entry name" value="S24_LexA-like"/>
    <property type="match status" value="1"/>
</dbReference>
<dbReference type="FunFam" id="1.10.10.10:FF:000009">
    <property type="entry name" value="LexA repressor"/>
    <property type="match status" value="1"/>
</dbReference>
<dbReference type="FunFam" id="2.10.109.10:FF:000001">
    <property type="entry name" value="LexA repressor"/>
    <property type="match status" value="1"/>
</dbReference>
<dbReference type="Gene3D" id="2.10.109.10">
    <property type="entry name" value="Umud Fragment, subunit A"/>
    <property type="match status" value="1"/>
</dbReference>
<dbReference type="Gene3D" id="1.10.10.10">
    <property type="entry name" value="Winged helix-like DNA-binding domain superfamily/Winged helix DNA-binding domain"/>
    <property type="match status" value="1"/>
</dbReference>
<dbReference type="HAMAP" id="MF_00015">
    <property type="entry name" value="LexA"/>
    <property type="match status" value="1"/>
</dbReference>
<dbReference type="InterPro" id="IPR006200">
    <property type="entry name" value="LexA"/>
</dbReference>
<dbReference type="InterPro" id="IPR039418">
    <property type="entry name" value="LexA-like"/>
</dbReference>
<dbReference type="InterPro" id="IPR036286">
    <property type="entry name" value="LexA/Signal_pep-like_sf"/>
</dbReference>
<dbReference type="InterPro" id="IPR006199">
    <property type="entry name" value="LexA_DNA-bd_dom"/>
</dbReference>
<dbReference type="InterPro" id="IPR050077">
    <property type="entry name" value="LexA_repressor"/>
</dbReference>
<dbReference type="InterPro" id="IPR006197">
    <property type="entry name" value="Peptidase_S24_LexA"/>
</dbReference>
<dbReference type="InterPro" id="IPR015927">
    <property type="entry name" value="Peptidase_S24_S26A/B/C"/>
</dbReference>
<dbReference type="InterPro" id="IPR036388">
    <property type="entry name" value="WH-like_DNA-bd_sf"/>
</dbReference>
<dbReference type="InterPro" id="IPR036390">
    <property type="entry name" value="WH_DNA-bd_sf"/>
</dbReference>
<dbReference type="NCBIfam" id="TIGR00498">
    <property type="entry name" value="lexA"/>
    <property type="match status" value="1"/>
</dbReference>
<dbReference type="PANTHER" id="PTHR33516">
    <property type="entry name" value="LEXA REPRESSOR"/>
    <property type="match status" value="1"/>
</dbReference>
<dbReference type="PANTHER" id="PTHR33516:SF2">
    <property type="entry name" value="LEXA REPRESSOR-RELATED"/>
    <property type="match status" value="1"/>
</dbReference>
<dbReference type="Pfam" id="PF01726">
    <property type="entry name" value="LexA_DNA_bind"/>
    <property type="match status" value="1"/>
</dbReference>
<dbReference type="Pfam" id="PF00717">
    <property type="entry name" value="Peptidase_S24"/>
    <property type="match status" value="1"/>
</dbReference>
<dbReference type="PRINTS" id="PR00726">
    <property type="entry name" value="LEXASERPTASE"/>
</dbReference>
<dbReference type="SUPFAM" id="SSF51306">
    <property type="entry name" value="LexA/Signal peptidase"/>
    <property type="match status" value="1"/>
</dbReference>
<dbReference type="SUPFAM" id="SSF46785">
    <property type="entry name" value="Winged helix' DNA-binding domain"/>
    <property type="match status" value="1"/>
</dbReference>
<comment type="function">
    <text evidence="1">Represses a number of genes involved in the response to DNA damage (SOS response), including recA and lexA. In the presence of single-stranded DNA, RecA interacts with LexA causing an autocatalytic cleavage which disrupts the DNA-binding part of LexA, leading to derepression of the SOS regulon and eventually DNA repair.</text>
</comment>
<comment type="catalytic activity">
    <reaction evidence="1">
        <text>Hydrolysis of Ala-|-Gly bond in repressor LexA.</text>
        <dbReference type="EC" id="3.4.21.88"/>
    </reaction>
</comment>
<comment type="subunit">
    <text evidence="1">Homodimer.</text>
</comment>
<comment type="similarity">
    <text evidence="1">Belongs to the peptidase S24 family.</text>
</comment>
<accession>A3PYG6</accession>
<organism>
    <name type="scientific">Mycobacterium sp. (strain JLS)</name>
    <dbReference type="NCBI Taxonomy" id="164757"/>
    <lineage>
        <taxon>Bacteria</taxon>
        <taxon>Bacillati</taxon>
        <taxon>Actinomycetota</taxon>
        <taxon>Actinomycetes</taxon>
        <taxon>Mycobacteriales</taxon>
        <taxon>Mycobacteriaceae</taxon>
        <taxon>Mycobacterium</taxon>
    </lineage>
</organism>
<protein>
    <recommendedName>
        <fullName evidence="1">LexA repressor</fullName>
        <ecNumber evidence="1">3.4.21.88</ecNumber>
    </recommendedName>
</protein>
<feature type="chain" id="PRO_0000322746" description="LexA repressor">
    <location>
        <begin position="1"/>
        <end position="230"/>
    </location>
</feature>
<feature type="DNA-binding region" description="H-T-H motif" evidence="1">
    <location>
        <begin position="44"/>
        <end position="64"/>
    </location>
</feature>
<feature type="region of interest" description="Disordered" evidence="2">
    <location>
        <begin position="1"/>
        <end position="21"/>
    </location>
</feature>
<feature type="active site" description="For autocatalytic cleavage activity" evidence="1">
    <location>
        <position position="154"/>
    </location>
</feature>
<feature type="active site" description="For autocatalytic cleavage activity" evidence="1">
    <location>
        <position position="191"/>
    </location>
</feature>
<feature type="site" description="Cleavage; by autolysis" evidence="1">
    <location>
        <begin position="119"/>
        <end position="120"/>
    </location>
</feature>
<gene>
    <name evidence="1" type="primary">lexA</name>
    <name type="ordered locus">Mjls_2157</name>
</gene>
<keyword id="KW-0068">Autocatalytic cleavage</keyword>
<keyword id="KW-0227">DNA damage</keyword>
<keyword id="KW-0234">DNA repair</keyword>
<keyword id="KW-0235">DNA replication</keyword>
<keyword id="KW-0238">DNA-binding</keyword>
<keyword id="KW-0378">Hydrolase</keyword>
<keyword id="KW-0678">Repressor</keyword>
<keyword id="KW-0742">SOS response</keyword>
<keyword id="KW-0804">Transcription</keyword>
<keyword id="KW-0805">Transcription regulation</keyword>
<proteinExistence type="inferred from homology"/>
<sequence length="230" mass="24560">MSDDSSETRTGGRRGADAGLTERQRTILEVIRASVTSRGYPPSIREIGDAVGLTSTSSVAHQLRTLERKGYLRRDPNRPRAVDVRLSDEPATPVVTTDVAGSDALPEPTFVPVLGRIAAGGPILAEEAVEDVFPLPRELVGEGSLFLLKVVGDSMVDAAICDGDWVVVRQQAVADNGDIVAAMIDGEATVKTFKRSRGQVWLMPHNPAFEPIPGNDAAVLGKVVTVIRKI</sequence>